<evidence type="ECO:0000250" key="1">
    <source>
        <dbReference type="UniProtKB" id="P56761"/>
    </source>
</evidence>
<evidence type="ECO:0000255" key="2">
    <source>
        <dbReference type="HAMAP-Rule" id="MF_01383"/>
    </source>
</evidence>
<proteinExistence type="inferred from homology"/>
<organism>
    <name type="scientific">Lotus japonicus</name>
    <name type="common">Lotus corniculatus var. japonicus</name>
    <dbReference type="NCBI Taxonomy" id="34305"/>
    <lineage>
        <taxon>Eukaryota</taxon>
        <taxon>Viridiplantae</taxon>
        <taxon>Streptophyta</taxon>
        <taxon>Embryophyta</taxon>
        <taxon>Tracheophyta</taxon>
        <taxon>Spermatophyta</taxon>
        <taxon>Magnoliopsida</taxon>
        <taxon>eudicotyledons</taxon>
        <taxon>Gunneridae</taxon>
        <taxon>Pentapetalae</taxon>
        <taxon>rosids</taxon>
        <taxon>fabids</taxon>
        <taxon>Fabales</taxon>
        <taxon>Fabaceae</taxon>
        <taxon>Papilionoideae</taxon>
        <taxon>50 kb inversion clade</taxon>
        <taxon>NPAAA clade</taxon>
        <taxon>Hologalegina</taxon>
        <taxon>robinioid clade</taxon>
        <taxon>Loteae</taxon>
        <taxon>Lotus</taxon>
    </lineage>
</organism>
<feature type="initiator methionine" description="Removed" evidence="1">
    <location>
        <position position="1"/>
    </location>
</feature>
<feature type="chain" id="PRO_0000090507" description="Photosystem II D2 protein">
    <location>
        <begin position="2"/>
        <end position="353"/>
    </location>
</feature>
<feature type="transmembrane region" description="Helical" evidence="2">
    <location>
        <begin position="41"/>
        <end position="61"/>
    </location>
</feature>
<feature type="transmembrane region" description="Helical" evidence="2">
    <location>
        <begin position="125"/>
        <end position="141"/>
    </location>
</feature>
<feature type="transmembrane region" description="Helical" evidence="2">
    <location>
        <begin position="153"/>
        <end position="166"/>
    </location>
</feature>
<feature type="transmembrane region" description="Helical" evidence="2">
    <location>
        <begin position="208"/>
        <end position="228"/>
    </location>
</feature>
<feature type="transmembrane region" description="Helical" evidence="2">
    <location>
        <begin position="279"/>
        <end position="295"/>
    </location>
</feature>
<feature type="binding site" description="axial binding residue" evidence="2">
    <location>
        <position position="118"/>
    </location>
    <ligand>
        <name>chlorophyll a</name>
        <dbReference type="ChEBI" id="CHEBI:58416"/>
        <label>ChlzD2</label>
    </ligand>
    <ligandPart>
        <name>Mg</name>
        <dbReference type="ChEBI" id="CHEBI:25107"/>
    </ligandPart>
</feature>
<feature type="binding site" evidence="2">
    <location>
        <position position="130"/>
    </location>
    <ligand>
        <name>pheophytin a</name>
        <dbReference type="ChEBI" id="CHEBI:136840"/>
        <label>D2</label>
    </ligand>
</feature>
<feature type="binding site" evidence="2">
    <location>
        <position position="143"/>
    </location>
    <ligand>
        <name>pheophytin a</name>
        <dbReference type="ChEBI" id="CHEBI:136840"/>
        <label>D2</label>
    </ligand>
</feature>
<feature type="binding site" description="axial binding residue" evidence="2">
    <location>
        <position position="198"/>
    </location>
    <ligand>
        <name>chlorophyll a</name>
        <dbReference type="ChEBI" id="CHEBI:58416"/>
        <label>PD2</label>
    </ligand>
    <ligandPart>
        <name>Mg</name>
        <dbReference type="ChEBI" id="CHEBI:25107"/>
    </ligandPart>
</feature>
<feature type="binding site" evidence="2">
    <location>
        <position position="215"/>
    </location>
    <ligand>
        <name>a plastoquinone</name>
        <dbReference type="ChEBI" id="CHEBI:17757"/>
        <label>Q(A)</label>
    </ligand>
</feature>
<feature type="binding site" evidence="2">
    <location>
        <position position="215"/>
    </location>
    <ligand>
        <name>Fe cation</name>
        <dbReference type="ChEBI" id="CHEBI:24875"/>
        <note>ligand shared with heterodimeric partner</note>
    </ligand>
</feature>
<feature type="binding site" evidence="2">
    <location>
        <position position="262"/>
    </location>
    <ligand>
        <name>a plastoquinone</name>
        <dbReference type="ChEBI" id="CHEBI:17757"/>
        <label>Q(A)</label>
    </ligand>
</feature>
<feature type="binding site" evidence="2">
    <location>
        <position position="269"/>
    </location>
    <ligand>
        <name>Fe cation</name>
        <dbReference type="ChEBI" id="CHEBI:24875"/>
        <note>ligand shared with heterodimeric partner</note>
    </ligand>
</feature>
<feature type="modified residue" description="N-acetylthreonine" evidence="1">
    <location>
        <position position="2"/>
    </location>
</feature>
<feature type="modified residue" description="Phosphothreonine" evidence="1">
    <location>
        <position position="2"/>
    </location>
</feature>
<sequence>MTIALGKFTKDENDLFDIMDDWLRRDRFVFVGWSGLLLFPCAYFALGGWFTGTTFVTSWYTHGLASSYLEGCNFLTAAVSTPANSLAHSLLLLWGPEAQGDFTRWCQLGGLWTFVALHGAFGLIGFMLRQFELARSVQLRPYNAIAFSGPIAVFVSVFLIYPLGQSGWFFAPSFGVAAIFRFILFFQGFHNWTLNPFHMMGVAGVLGAALLCAIHGATVENTLFEDGDGANTFRAFNPTQAEETYSMVTANRFWSQIFGVAFSNKRWLHFFMLFVPVTGLWMSALGVVGLALNLRAYDFVSQEIRAAEDPEFETFYTKNILLNEGIRAWMAAQDQPHENLIFPEEVLPRGNAL</sequence>
<geneLocation type="chloroplast"/>
<gene>
    <name evidence="2" type="primary">psbD</name>
</gene>
<keyword id="KW-0007">Acetylation</keyword>
<keyword id="KW-0148">Chlorophyll</keyword>
<keyword id="KW-0150">Chloroplast</keyword>
<keyword id="KW-0157">Chromophore</keyword>
<keyword id="KW-0249">Electron transport</keyword>
<keyword id="KW-0408">Iron</keyword>
<keyword id="KW-0460">Magnesium</keyword>
<keyword id="KW-0472">Membrane</keyword>
<keyword id="KW-0479">Metal-binding</keyword>
<keyword id="KW-0560">Oxidoreductase</keyword>
<keyword id="KW-0597">Phosphoprotein</keyword>
<keyword id="KW-0602">Photosynthesis</keyword>
<keyword id="KW-0604">Photosystem II</keyword>
<keyword id="KW-0934">Plastid</keyword>
<keyword id="KW-0793">Thylakoid</keyword>
<keyword id="KW-0812">Transmembrane</keyword>
<keyword id="KW-1133">Transmembrane helix</keyword>
<keyword id="KW-0813">Transport</keyword>
<name>PSBD_LOTJA</name>
<comment type="function">
    <text evidence="2">Photosystem II (PSII) is a light-driven water:plastoquinone oxidoreductase that uses light energy to abstract electrons from H(2)O, generating O(2) and a proton gradient subsequently used for ATP formation. It consists of a core antenna complex that captures photons, and an electron transfer chain that converts photonic excitation into a charge separation. The D1/D2 (PsbA/PsbD) reaction center heterodimer binds P680, the primary electron donor of PSII as well as several subsequent electron acceptors. D2 is needed for assembly of a stable PSII complex.</text>
</comment>
<comment type="catalytic activity">
    <reaction evidence="2">
        <text>2 a plastoquinone + 4 hnu + 2 H2O = 2 a plastoquinol + O2</text>
        <dbReference type="Rhea" id="RHEA:36359"/>
        <dbReference type="Rhea" id="RHEA-COMP:9561"/>
        <dbReference type="Rhea" id="RHEA-COMP:9562"/>
        <dbReference type="ChEBI" id="CHEBI:15377"/>
        <dbReference type="ChEBI" id="CHEBI:15379"/>
        <dbReference type="ChEBI" id="CHEBI:17757"/>
        <dbReference type="ChEBI" id="CHEBI:30212"/>
        <dbReference type="ChEBI" id="CHEBI:62192"/>
        <dbReference type="EC" id="1.10.3.9"/>
    </reaction>
</comment>
<comment type="cofactor">
    <text evidence="2">The D1/D2 heterodimer binds P680, chlorophylls that are the primary electron donor of PSII, and subsequent electron acceptors. It shares a non-heme iron and each subunit binds pheophytin, quinone, additional chlorophylls, carotenoids and lipids. There is also a Cl(-1) ion associated with D1 and D2, which is required for oxygen evolution. The PSII complex binds additional chlorophylls, carotenoids and specific lipids.</text>
</comment>
<comment type="subunit">
    <text evidence="2">PSII is composed of 1 copy each of membrane proteins PsbA, PsbB, PsbC, PsbD, PsbE, PsbF, PsbH, PsbI, PsbJ, PsbK, PsbL, PsbM, PsbT, PsbX, PsbY, PsbZ, Psb30/Ycf12, at least 3 peripheral proteins of the oxygen-evolving complex and a large number of cofactors. It forms dimeric complexes.</text>
</comment>
<comment type="subcellular location">
    <subcellularLocation>
        <location evidence="2">Plastid</location>
        <location evidence="2">Chloroplast thylakoid membrane</location>
        <topology evidence="2">Multi-pass membrane protein</topology>
    </subcellularLocation>
</comment>
<comment type="miscellaneous">
    <text evidence="2">2 of the reaction center chlorophylls (ChlD1 and ChlD2) are entirely coordinated by water.</text>
</comment>
<comment type="similarity">
    <text evidence="2">Belongs to the reaction center PufL/M/PsbA/D family.</text>
</comment>
<reference key="1">
    <citation type="journal article" date="2000" name="DNA Res.">
        <title>Complete structure of the chloroplast genome of a legume, Lotus japonicus.</title>
        <authorList>
            <person name="Kato T."/>
            <person name="Kaneko T."/>
            <person name="Sato S."/>
            <person name="Nakamura Y."/>
            <person name="Tabata S."/>
        </authorList>
    </citation>
    <scope>NUCLEOTIDE SEQUENCE [LARGE SCALE GENOMIC DNA]</scope>
    <source>
        <strain>cv. Miyakojima MG-20</strain>
    </source>
</reference>
<accession>Q9BBT0</accession>
<dbReference type="EC" id="1.10.3.9" evidence="2"/>
<dbReference type="EMBL" id="AP002983">
    <property type="protein sequence ID" value="BAB33191.1"/>
    <property type="molecule type" value="Genomic_DNA"/>
</dbReference>
<dbReference type="RefSeq" id="NP_084793.1">
    <property type="nucleotide sequence ID" value="NC_002694.1"/>
</dbReference>
<dbReference type="SMR" id="Q9BBT0"/>
<dbReference type="GeneID" id="802875"/>
<dbReference type="OMA" id="RWFQLGG"/>
<dbReference type="GO" id="GO:0009535">
    <property type="term" value="C:chloroplast thylakoid membrane"/>
    <property type="evidence" value="ECO:0007669"/>
    <property type="project" value="UniProtKB-SubCell"/>
</dbReference>
<dbReference type="GO" id="GO:0009523">
    <property type="term" value="C:photosystem II"/>
    <property type="evidence" value="ECO:0007669"/>
    <property type="project" value="UniProtKB-KW"/>
</dbReference>
<dbReference type="GO" id="GO:0016168">
    <property type="term" value="F:chlorophyll binding"/>
    <property type="evidence" value="ECO:0007669"/>
    <property type="project" value="UniProtKB-UniRule"/>
</dbReference>
<dbReference type="GO" id="GO:0045156">
    <property type="term" value="F:electron transporter, transferring electrons within the cyclic electron transport pathway of photosynthesis activity"/>
    <property type="evidence" value="ECO:0007669"/>
    <property type="project" value="InterPro"/>
</dbReference>
<dbReference type="GO" id="GO:0005506">
    <property type="term" value="F:iron ion binding"/>
    <property type="evidence" value="ECO:0007669"/>
    <property type="project" value="UniProtKB-UniRule"/>
</dbReference>
<dbReference type="GO" id="GO:0010242">
    <property type="term" value="F:oxygen evolving activity"/>
    <property type="evidence" value="ECO:0007669"/>
    <property type="project" value="UniProtKB-EC"/>
</dbReference>
<dbReference type="GO" id="GO:0009772">
    <property type="term" value="P:photosynthetic electron transport in photosystem II"/>
    <property type="evidence" value="ECO:0007669"/>
    <property type="project" value="InterPro"/>
</dbReference>
<dbReference type="CDD" id="cd09288">
    <property type="entry name" value="Photosystem-II_D2"/>
    <property type="match status" value="1"/>
</dbReference>
<dbReference type="FunFam" id="1.20.85.10:FF:000001">
    <property type="entry name" value="photosystem II D2 protein-like"/>
    <property type="match status" value="1"/>
</dbReference>
<dbReference type="Gene3D" id="1.20.85.10">
    <property type="entry name" value="Photosystem II protein D1-like"/>
    <property type="match status" value="1"/>
</dbReference>
<dbReference type="HAMAP" id="MF_01383">
    <property type="entry name" value="PSII_PsbD_D2"/>
    <property type="match status" value="1"/>
</dbReference>
<dbReference type="InterPro" id="IPR055266">
    <property type="entry name" value="D1/D2"/>
</dbReference>
<dbReference type="InterPro" id="IPR036854">
    <property type="entry name" value="Photo_II_D1/D2_sf"/>
</dbReference>
<dbReference type="InterPro" id="IPR000484">
    <property type="entry name" value="Photo_RC_L/M"/>
</dbReference>
<dbReference type="InterPro" id="IPR055265">
    <property type="entry name" value="Photo_RC_L/M_CS"/>
</dbReference>
<dbReference type="InterPro" id="IPR005868">
    <property type="entry name" value="PSII_PsbD/D2"/>
</dbReference>
<dbReference type="NCBIfam" id="TIGR01152">
    <property type="entry name" value="psbD"/>
    <property type="match status" value="1"/>
</dbReference>
<dbReference type="PANTHER" id="PTHR33149:SF12">
    <property type="entry name" value="PHOTOSYSTEM II D2 PROTEIN"/>
    <property type="match status" value="1"/>
</dbReference>
<dbReference type="PANTHER" id="PTHR33149">
    <property type="entry name" value="PHOTOSYSTEM II PROTEIN D1"/>
    <property type="match status" value="1"/>
</dbReference>
<dbReference type="Pfam" id="PF00124">
    <property type="entry name" value="Photo_RC"/>
    <property type="match status" value="1"/>
</dbReference>
<dbReference type="PRINTS" id="PR00256">
    <property type="entry name" value="REACTNCENTRE"/>
</dbReference>
<dbReference type="SUPFAM" id="SSF81483">
    <property type="entry name" value="Bacterial photosystem II reaction centre, L and M subunits"/>
    <property type="match status" value="1"/>
</dbReference>
<dbReference type="PROSITE" id="PS00244">
    <property type="entry name" value="REACTION_CENTER"/>
    <property type="match status" value="1"/>
</dbReference>
<protein>
    <recommendedName>
        <fullName evidence="2">Photosystem II D2 protein</fullName>
        <shortName evidence="2">PSII D2 protein</shortName>
        <ecNumber evidence="2">1.10.3.9</ecNumber>
    </recommendedName>
    <alternativeName>
        <fullName evidence="2">Photosystem Q(A) protein</fullName>
    </alternativeName>
</protein>